<keyword id="KW-1185">Reference proteome</keyword>
<protein>
    <recommendedName>
        <fullName>Uncharacterized protein C17orf50 homolog</fullName>
    </recommendedName>
</protein>
<organism>
    <name type="scientific">Mus musculus</name>
    <name type="common">Mouse</name>
    <dbReference type="NCBI Taxonomy" id="10090"/>
    <lineage>
        <taxon>Eukaryota</taxon>
        <taxon>Metazoa</taxon>
        <taxon>Chordata</taxon>
        <taxon>Craniata</taxon>
        <taxon>Vertebrata</taxon>
        <taxon>Euteleostomi</taxon>
        <taxon>Mammalia</taxon>
        <taxon>Eutheria</taxon>
        <taxon>Euarchontoglires</taxon>
        <taxon>Glires</taxon>
        <taxon>Rodentia</taxon>
        <taxon>Myomorpha</taxon>
        <taxon>Muroidea</taxon>
        <taxon>Muridae</taxon>
        <taxon>Murinae</taxon>
        <taxon>Mus</taxon>
        <taxon>Mus</taxon>
    </lineage>
</organism>
<proteinExistence type="evidence at transcript level"/>
<evidence type="ECO:0000256" key="1">
    <source>
        <dbReference type="SAM" id="MobiDB-lite"/>
    </source>
</evidence>
<evidence type="ECO:0000305" key="2"/>
<reference key="1">
    <citation type="journal article" date="2005" name="Science">
        <title>The transcriptional landscape of the mammalian genome.</title>
        <authorList>
            <person name="Carninci P."/>
            <person name="Kasukawa T."/>
            <person name="Katayama S."/>
            <person name="Gough J."/>
            <person name="Frith M.C."/>
            <person name="Maeda N."/>
            <person name="Oyama R."/>
            <person name="Ravasi T."/>
            <person name="Lenhard B."/>
            <person name="Wells C."/>
            <person name="Kodzius R."/>
            <person name="Shimokawa K."/>
            <person name="Bajic V.B."/>
            <person name="Brenner S.E."/>
            <person name="Batalov S."/>
            <person name="Forrest A.R."/>
            <person name="Zavolan M."/>
            <person name="Davis M.J."/>
            <person name="Wilming L.G."/>
            <person name="Aidinis V."/>
            <person name="Allen J.E."/>
            <person name="Ambesi-Impiombato A."/>
            <person name="Apweiler R."/>
            <person name="Aturaliya R.N."/>
            <person name="Bailey T.L."/>
            <person name="Bansal M."/>
            <person name="Baxter L."/>
            <person name="Beisel K.W."/>
            <person name="Bersano T."/>
            <person name="Bono H."/>
            <person name="Chalk A.M."/>
            <person name="Chiu K.P."/>
            <person name="Choudhary V."/>
            <person name="Christoffels A."/>
            <person name="Clutterbuck D.R."/>
            <person name="Crowe M.L."/>
            <person name="Dalla E."/>
            <person name="Dalrymple B.P."/>
            <person name="de Bono B."/>
            <person name="Della Gatta G."/>
            <person name="di Bernardo D."/>
            <person name="Down T."/>
            <person name="Engstrom P."/>
            <person name="Fagiolini M."/>
            <person name="Faulkner G."/>
            <person name="Fletcher C.F."/>
            <person name="Fukushima T."/>
            <person name="Furuno M."/>
            <person name="Futaki S."/>
            <person name="Gariboldi M."/>
            <person name="Georgii-Hemming P."/>
            <person name="Gingeras T.R."/>
            <person name="Gojobori T."/>
            <person name="Green R.E."/>
            <person name="Gustincich S."/>
            <person name="Harbers M."/>
            <person name="Hayashi Y."/>
            <person name="Hensch T.K."/>
            <person name="Hirokawa N."/>
            <person name="Hill D."/>
            <person name="Huminiecki L."/>
            <person name="Iacono M."/>
            <person name="Ikeo K."/>
            <person name="Iwama A."/>
            <person name="Ishikawa T."/>
            <person name="Jakt M."/>
            <person name="Kanapin A."/>
            <person name="Katoh M."/>
            <person name="Kawasawa Y."/>
            <person name="Kelso J."/>
            <person name="Kitamura H."/>
            <person name="Kitano H."/>
            <person name="Kollias G."/>
            <person name="Krishnan S.P."/>
            <person name="Kruger A."/>
            <person name="Kummerfeld S.K."/>
            <person name="Kurochkin I.V."/>
            <person name="Lareau L.F."/>
            <person name="Lazarevic D."/>
            <person name="Lipovich L."/>
            <person name="Liu J."/>
            <person name="Liuni S."/>
            <person name="McWilliam S."/>
            <person name="Madan Babu M."/>
            <person name="Madera M."/>
            <person name="Marchionni L."/>
            <person name="Matsuda H."/>
            <person name="Matsuzawa S."/>
            <person name="Miki H."/>
            <person name="Mignone F."/>
            <person name="Miyake S."/>
            <person name="Morris K."/>
            <person name="Mottagui-Tabar S."/>
            <person name="Mulder N."/>
            <person name="Nakano N."/>
            <person name="Nakauchi H."/>
            <person name="Ng P."/>
            <person name="Nilsson R."/>
            <person name="Nishiguchi S."/>
            <person name="Nishikawa S."/>
            <person name="Nori F."/>
            <person name="Ohara O."/>
            <person name="Okazaki Y."/>
            <person name="Orlando V."/>
            <person name="Pang K.C."/>
            <person name="Pavan W.J."/>
            <person name="Pavesi G."/>
            <person name="Pesole G."/>
            <person name="Petrovsky N."/>
            <person name="Piazza S."/>
            <person name="Reed J."/>
            <person name="Reid J.F."/>
            <person name="Ring B.Z."/>
            <person name="Ringwald M."/>
            <person name="Rost B."/>
            <person name="Ruan Y."/>
            <person name="Salzberg S.L."/>
            <person name="Sandelin A."/>
            <person name="Schneider C."/>
            <person name="Schoenbach C."/>
            <person name="Sekiguchi K."/>
            <person name="Semple C.A."/>
            <person name="Seno S."/>
            <person name="Sessa L."/>
            <person name="Sheng Y."/>
            <person name="Shibata Y."/>
            <person name="Shimada H."/>
            <person name="Shimada K."/>
            <person name="Silva D."/>
            <person name="Sinclair B."/>
            <person name="Sperling S."/>
            <person name="Stupka E."/>
            <person name="Sugiura K."/>
            <person name="Sultana R."/>
            <person name="Takenaka Y."/>
            <person name="Taki K."/>
            <person name="Tammoja K."/>
            <person name="Tan S.L."/>
            <person name="Tang S."/>
            <person name="Taylor M.S."/>
            <person name="Tegner J."/>
            <person name="Teichmann S.A."/>
            <person name="Ueda H.R."/>
            <person name="van Nimwegen E."/>
            <person name="Verardo R."/>
            <person name="Wei C.L."/>
            <person name="Yagi K."/>
            <person name="Yamanishi H."/>
            <person name="Zabarovsky E."/>
            <person name="Zhu S."/>
            <person name="Zimmer A."/>
            <person name="Hide W."/>
            <person name="Bult C."/>
            <person name="Grimmond S.M."/>
            <person name="Teasdale R.D."/>
            <person name="Liu E.T."/>
            <person name="Brusic V."/>
            <person name="Quackenbush J."/>
            <person name="Wahlestedt C."/>
            <person name="Mattick J.S."/>
            <person name="Hume D.A."/>
            <person name="Kai C."/>
            <person name="Sasaki D."/>
            <person name="Tomaru Y."/>
            <person name="Fukuda S."/>
            <person name="Kanamori-Katayama M."/>
            <person name="Suzuki M."/>
            <person name="Aoki J."/>
            <person name="Arakawa T."/>
            <person name="Iida J."/>
            <person name="Imamura K."/>
            <person name="Itoh M."/>
            <person name="Kato T."/>
            <person name="Kawaji H."/>
            <person name="Kawagashira N."/>
            <person name="Kawashima T."/>
            <person name="Kojima M."/>
            <person name="Kondo S."/>
            <person name="Konno H."/>
            <person name="Nakano K."/>
            <person name="Ninomiya N."/>
            <person name="Nishio T."/>
            <person name="Okada M."/>
            <person name="Plessy C."/>
            <person name="Shibata K."/>
            <person name="Shiraki T."/>
            <person name="Suzuki S."/>
            <person name="Tagami M."/>
            <person name="Waki K."/>
            <person name="Watahiki A."/>
            <person name="Okamura-Oho Y."/>
            <person name="Suzuki H."/>
            <person name="Kawai J."/>
            <person name="Hayashizaki Y."/>
        </authorList>
    </citation>
    <scope>NUCLEOTIDE SEQUENCE [LARGE SCALE MRNA]</scope>
    <source>
        <strain>C57BL/6J</strain>
        <tissue>Testis</tissue>
    </source>
</reference>
<reference key="2">
    <citation type="journal article" date="2009" name="PLoS Biol.">
        <title>Lineage-specific biology revealed by a finished genome assembly of the mouse.</title>
        <authorList>
            <person name="Church D.M."/>
            <person name="Goodstadt L."/>
            <person name="Hillier L.W."/>
            <person name="Zody M.C."/>
            <person name="Goldstein S."/>
            <person name="She X."/>
            <person name="Bult C.J."/>
            <person name="Agarwala R."/>
            <person name="Cherry J.L."/>
            <person name="DiCuccio M."/>
            <person name="Hlavina W."/>
            <person name="Kapustin Y."/>
            <person name="Meric P."/>
            <person name="Maglott D."/>
            <person name="Birtle Z."/>
            <person name="Marques A.C."/>
            <person name="Graves T."/>
            <person name="Zhou S."/>
            <person name="Teague B."/>
            <person name="Potamousis K."/>
            <person name="Churas C."/>
            <person name="Place M."/>
            <person name="Herschleb J."/>
            <person name="Runnheim R."/>
            <person name="Forrest D."/>
            <person name="Amos-Landgraf J."/>
            <person name="Schwartz D.C."/>
            <person name="Cheng Z."/>
            <person name="Lindblad-Toh K."/>
            <person name="Eichler E.E."/>
            <person name="Ponting C.P."/>
        </authorList>
    </citation>
    <scope>NUCLEOTIDE SEQUENCE [LARGE SCALE GENOMIC DNA]</scope>
    <source>
        <strain>C57BL/6J</strain>
    </source>
</reference>
<reference key="3">
    <citation type="journal article" date="2004" name="Genome Res.">
        <title>The status, quality, and expansion of the NIH full-length cDNA project: the Mammalian Gene Collection (MGC).</title>
        <authorList>
            <consortium name="The MGC Project Team"/>
        </authorList>
    </citation>
    <scope>NUCLEOTIDE SEQUENCE [LARGE SCALE MRNA]</scope>
</reference>
<feature type="chain" id="PRO_0000251203" description="Uncharacterized protein C17orf50 homolog">
    <location>
        <begin position="1"/>
        <end position="189"/>
    </location>
</feature>
<feature type="region of interest" description="Disordered" evidence="1">
    <location>
        <begin position="1"/>
        <end position="77"/>
    </location>
</feature>
<feature type="compositionally biased region" description="Basic and acidic residues" evidence="1">
    <location>
        <begin position="1"/>
        <end position="15"/>
    </location>
</feature>
<feature type="compositionally biased region" description="Acidic residues" evidence="1">
    <location>
        <begin position="16"/>
        <end position="29"/>
    </location>
</feature>
<feature type="compositionally biased region" description="Acidic residues" evidence="1">
    <location>
        <begin position="46"/>
        <end position="56"/>
    </location>
</feature>
<feature type="compositionally biased region" description="Polar residues" evidence="1">
    <location>
        <begin position="65"/>
        <end position="77"/>
    </location>
</feature>
<feature type="sequence conflict" description="In Ref. 1; BAB24249." evidence="2" ref="1">
    <original>G</original>
    <variation>R</variation>
    <location>
        <position position="101"/>
    </location>
</feature>
<name>CQ050_MOUSE</name>
<accession>Q8C1R3</accession>
<accession>A7MCU3</accession>
<accession>Q9DAI8</accession>
<sequence length="189" mass="21117">MDKHGVKTPLWRKEVEDPEAREEDLEDDSSSSSSSSSVEERSDPESATETEEDSRDAEEREARSVSYSPLRQESSSQQVALLRRSDSSFWGWLSPFALLGGLAAPADRKRGAPEEPCVLETRRRPPRRGGCARCEILFCKKCKTLHSHPAYVEHCILEHPDLGKAEATGNSELIDSQPPSPQCSKLFYL</sequence>
<dbReference type="EMBL" id="AK005809">
    <property type="protein sequence ID" value="BAB24249.1"/>
    <property type="molecule type" value="mRNA"/>
</dbReference>
<dbReference type="EMBL" id="AK006174">
    <property type="protein sequence ID" value="BAC25136.1"/>
    <property type="molecule type" value="mRNA"/>
</dbReference>
<dbReference type="EMBL" id="AL663096">
    <property type="status" value="NOT_ANNOTATED_CDS"/>
    <property type="molecule type" value="Genomic_DNA"/>
</dbReference>
<dbReference type="EMBL" id="BC152320">
    <property type="protein sequence ID" value="AAI52321.1"/>
    <property type="molecule type" value="mRNA"/>
</dbReference>
<dbReference type="CCDS" id="CCDS25165.1"/>
<dbReference type="RefSeq" id="NP_079768.2">
    <property type="nucleotide sequence ID" value="NM_025492.3"/>
</dbReference>
<dbReference type="FunCoup" id="Q8C1R3">
    <property type="interactions" value="2"/>
</dbReference>
<dbReference type="SwissPalm" id="Q8C1R3"/>
<dbReference type="PaxDb" id="10090-ENSMUSP00000042098"/>
<dbReference type="Antibodypedia" id="77192">
    <property type="antibodies" value="5 antibodies from 5 providers"/>
</dbReference>
<dbReference type="Ensembl" id="ENSMUST00000037378.6">
    <property type="protein sequence ID" value="ENSMUSP00000042098.5"/>
    <property type="gene ID" value="ENSMUSG00000035085.6"/>
</dbReference>
<dbReference type="GeneID" id="66330"/>
<dbReference type="KEGG" id="mmu:66330"/>
<dbReference type="UCSC" id="uc007koz.2">
    <property type="organism name" value="mouse"/>
</dbReference>
<dbReference type="AGR" id="MGI:1913580"/>
<dbReference type="MGI" id="MGI:1913580">
    <property type="gene designation" value="1700020L24Rik"/>
</dbReference>
<dbReference type="VEuPathDB" id="HostDB:ENSMUSG00000035085"/>
<dbReference type="eggNOG" id="ENOG502SXTN">
    <property type="taxonomic scope" value="Eukaryota"/>
</dbReference>
<dbReference type="GeneTree" id="ENSGT00390000007830"/>
<dbReference type="HOGENOM" id="CLU_102789_0_0_1"/>
<dbReference type="InParanoid" id="Q8C1R3"/>
<dbReference type="OMA" id="HCVLEHP"/>
<dbReference type="OrthoDB" id="9666283at2759"/>
<dbReference type="PhylomeDB" id="Q8C1R3"/>
<dbReference type="TreeFam" id="TF337655"/>
<dbReference type="BioGRID-ORCS" id="66330">
    <property type="hits" value="5 hits in 77 CRISPR screens"/>
</dbReference>
<dbReference type="PRO" id="PR:Q8C1R3"/>
<dbReference type="Proteomes" id="UP000000589">
    <property type="component" value="Chromosome 11"/>
</dbReference>
<dbReference type="RNAct" id="Q8C1R3">
    <property type="molecule type" value="protein"/>
</dbReference>
<dbReference type="Bgee" id="ENSMUSG00000035085">
    <property type="expression patterns" value="Expressed in spermatid and 54 other cell types or tissues"/>
</dbReference>
<dbReference type="ExpressionAtlas" id="Q8C1R3">
    <property type="expression patterns" value="baseline and differential"/>
</dbReference>
<dbReference type="InterPro" id="IPR029174">
    <property type="entry name" value="DUF4637"/>
</dbReference>
<dbReference type="PANTHER" id="PTHR37878:SF1">
    <property type="entry name" value="DUF4637 DOMAIN-CONTAINING PROTEIN"/>
    <property type="match status" value="1"/>
</dbReference>
<dbReference type="PANTHER" id="PTHR37878">
    <property type="entry name" value="HYPOTHETICAL PROTEIN LOC689039"/>
    <property type="match status" value="1"/>
</dbReference>
<dbReference type="Pfam" id="PF15470">
    <property type="entry name" value="DUF4637"/>
    <property type="match status" value="1"/>
</dbReference>